<reference key="1">
    <citation type="submission" date="2007-06" db="EMBL/GenBank/DDBJ databases">
        <title>Complete sequence of Sinorhizobium medicae WSM419 chromosome.</title>
        <authorList>
            <consortium name="US DOE Joint Genome Institute"/>
            <person name="Copeland A."/>
            <person name="Lucas S."/>
            <person name="Lapidus A."/>
            <person name="Barry K."/>
            <person name="Glavina del Rio T."/>
            <person name="Dalin E."/>
            <person name="Tice H."/>
            <person name="Pitluck S."/>
            <person name="Chain P."/>
            <person name="Malfatti S."/>
            <person name="Shin M."/>
            <person name="Vergez L."/>
            <person name="Schmutz J."/>
            <person name="Larimer F."/>
            <person name="Land M."/>
            <person name="Hauser L."/>
            <person name="Kyrpides N."/>
            <person name="Mikhailova N."/>
            <person name="Reeve W.G."/>
            <person name="Richardson P."/>
        </authorList>
    </citation>
    <scope>NUCLEOTIDE SEQUENCE [LARGE SCALE GENOMIC DNA]</scope>
    <source>
        <strain>WSM419</strain>
    </source>
</reference>
<protein>
    <recommendedName>
        <fullName evidence="1">Bifunctional protein FolD 2</fullName>
    </recommendedName>
    <domain>
        <recommendedName>
            <fullName evidence="1">Methylenetetrahydrofolate dehydrogenase</fullName>
            <ecNumber evidence="1">1.5.1.5</ecNumber>
        </recommendedName>
    </domain>
    <domain>
        <recommendedName>
            <fullName evidence="1">Methenyltetrahydrofolate cyclohydrolase</fullName>
            <ecNumber evidence="1">3.5.4.9</ecNumber>
        </recommendedName>
    </domain>
</protein>
<feature type="chain" id="PRO_0000340598" description="Bifunctional protein FolD 2">
    <location>
        <begin position="1"/>
        <end position="297"/>
    </location>
</feature>
<feature type="binding site" evidence="1">
    <location>
        <begin position="173"/>
        <end position="175"/>
    </location>
    <ligand>
        <name>NADP(+)</name>
        <dbReference type="ChEBI" id="CHEBI:58349"/>
    </ligand>
</feature>
<feature type="binding site" evidence="1">
    <location>
        <position position="198"/>
    </location>
    <ligand>
        <name>NADP(+)</name>
        <dbReference type="ChEBI" id="CHEBI:58349"/>
    </ligand>
</feature>
<feature type="binding site" evidence="1">
    <location>
        <position position="239"/>
    </location>
    <ligand>
        <name>NADP(+)</name>
        <dbReference type="ChEBI" id="CHEBI:58349"/>
    </ligand>
</feature>
<organism>
    <name type="scientific">Sinorhizobium medicae (strain WSM419)</name>
    <name type="common">Ensifer medicae</name>
    <dbReference type="NCBI Taxonomy" id="366394"/>
    <lineage>
        <taxon>Bacteria</taxon>
        <taxon>Pseudomonadati</taxon>
        <taxon>Pseudomonadota</taxon>
        <taxon>Alphaproteobacteria</taxon>
        <taxon>Hyphomicrobiales</taxon>
        <taxon>Rhizobiaceae</taxon>
        <taxon>Sinorhizobium/Ensifer group</taxon>
        <taxon>Sinorhizobium</taxon>
    </lineage>
</organism>
<keyword id="KW-0028">Amino-acid biosynthesis</keyword>
<keyword id="KW-0368">Histidine biosynthesis</keyword>
<keyword id="KW-0378">Hydrolase</keyword>
<keyword id="KW-0486">Methionine biosynthesis</keyword>
<keyword id="KW-0511">Multifunctional enzyme</keyword>
<keyword id="KW-0521">NADP</keyword>
<keyword id="KW-0554">One-carbon metabolism</keyword>
<keyword id="KW-0560">Oxidoreductase</keyword>
<keyword id="KW-0658">Purine biosynthesis</keyword>
<accession>A6UB98</accession>
<proteinExistence type="inferred from homology"/>
<comment type="function">
    <text evidence="1">Catalyzes the oxidation of 5,10-methylenetetrahydrofolate to 5,10-methenyltetrahydrofolate and then the hydrolysis of 5,10-methenyltetrahydrofolate to 10-formyltetrahydrofolate.</text>
</comment>
<comment type="catalytic activity">
    <reaction evidence="1">
        <text>(6R)-5,10-methylene-5,6,7,8-tetrahydrofolate + NADP(+) = (6R)-5,10-methenyltetrahydrofolate + NADPH</text>
        <dbReference type="Rhea" id="RHEA:22812"/>
        <dbReference type="ChEBI" id="CHEBI:15636"/>
        <dbReference type="ChEBI" id="CHEBI:57455"/>
        <dbReference type="ChEBI" id="CHEBI:57783"/>
        <dbReference type="ChEBI" id="CHEBI:58349"/>
        <dbReference type="EC" id="1.5.1.5"/>
    </reaction>
</comment>
<comment type="catalytic activity">
    <reaction evidence="1">
        <text>(6R)-5,10-methenyltetrahydrofolate + H2O = (6R)-10-formyltetrahydrofolate + H(+)</text>
        <dbReference type="Rhea" id="RHEA:23700"/>
        <dbReference type="ChEBI" id="CHEBI:15377"/>
        <dbReference type="ChEBI" id="CHEBI:15378"/>
        <dbReference type="ChEBI" id="CHEBI:57455"/>
        <dbReference type="ChEBI" id="CHEBI:195366"/>
        <dbReference type="EC" id="3.5.4.9"/>
    </reaction>
</comment>
<comment type="pathway">
    <text evidence="1">One-carbon metabolism; tetrahydrofolate interconversion.</text>
</comment>
<comment type="subunit">
    <text evidence="1">Homodimer.</text>
</comment>
<comment type="similarity">
    <text evidence="1">Belongs to the tetrahydrofolate dehydrogenase/cyclohydrolase family.</text>
</comment>
<dbReference type="EC" id="1.5.1.5" evidence="1"/>
<dbReference type="EC" id="3.5.4.9" evidence="1"/>
<dbReference type="EMBL" id="CP000738">
    <property type="protein sequence ID" value="ABR60928.1"/>
    <property type="molecule type" value="Genomic_DNA"/>
</dbReference>
<dbReference type="RefSeq" id="WP_011976225.1">
    <property type="nucleotide sequence ID" value="NC_009636.1"/>
</dbReference>
<dbReference type="RefSeq" id="YP_001327763.1">
    <property type="nucleotide sequence ID" value="NC_009636.1"/>
</dbReference>
<dbReference type="SMR" id="A6UB98"/>
<dbReference type="STRING" id="366394.Smed_2095"/>
<dbReference type="KEGG" id="smd:Smed_2095"/>
<dbReference type="PATRIC" id="fig|366394.8.peg.5253"/>
<dbReference type="eggNOG" id="COG0190">
    <property type="taxonomic scope" value="Bacteria"/>
</dbReference>
<dbReference type="HOGENOM" id="CLU_034045_1_2_5"/>
<dbReference type="OrthoDB" id="9803580at2"/>
<dbReference type="UniPathway" id="UPA00193"/>
<dbReference type="Proteomes" id="UP000001108">
    <property type="component" value="Chromosome"/>
</dbReference>
<dbReference type="GO" id="GO:0005829">
    <property type="term" value="C:cytosol"/>
    <property type="evidence" value="ECO:0007669"/>
    <property type="project" value="TreeGrafter"/>
</dbReference>
<dbReference type="GO" id="GO:0004477">
    <property type="term" value="F:methenyltetrahydrofolate cyclohydrolase activity"/>
    <property type="evidence" value="ECO:0007669"/>
    <property type="project" value="UniProtKB-UniRule"/>
</dbReference>
<dbReference type="GO" id="GO:0004488">
    <property type="term" value="F:methylenetetrahydrofolate dehydrogenase (NADP+) activity"/>
    <property type="evidence" value="ECO:0007669"/>
    <property type="project" value="UniProtKB-UniRule"/>
</dbReference>
<dbReference type="GO" id="GO:0000105">
    <property type="term" value="P:L-histidine biosynthetic process"/>
    <property type="evidence" value="ECO:0007669"/>
    <property type="project" value="UniProtKB-KW"/>
</dbReference>
<dbReference type="GO" id="GO:0009086">
    <property type="term" value="P:methionine biosynthetic process"/>
    <property type="evidence" value="ECO:0007669"/>
    <property type="project" value="UniProtKB-KW"/>
</dbReference>
<dbReference type="GO" id="GO:0006164">
    <property type="term" value="P:purine nucleotide biosynthetic process"/>
    <property type="evidence" value="ECO:0007669"/>
    <property type="project" value="UniProtKB-KW"/>
</dbReference>
<dbReference type="GO" id="GO:0035999">
    <property type="term" value="P:tetrahydrofolate interconversion"/>
    <property type="evidence" value="ECO:0007669"/>
    <property type="project" value="UniProtKB-UniRule"/>
</dbReference>
<dbReference type="CDD" id="cd01080">
    <property type="entry name" value="NAD_bind_m-THF_DH_Cyclohyd"/>
    <property type="match status" value="1"/>
</dbReference>
<dbReference type="FunFam" id="3.40.50.720:FF:000006">
    <property type="entry name" value="Bifunctional protein FolD"/>
    <property type="match status" value="1"/>
</dbReference>
<dbReference type="FunFam" id="3.40.50.10860:FF:000005">
    <property type="entry name" value="C-1-tetrahydrofolate synthase, cytoplasmic, putative"/>
    <property type="match status" value="1"/>
</dbReference>
<dbReference type="Gene3D" id="3.40.50.10860">
    <property type="entry name" value="Leucine Dehydrogenase, chain A, domain 1"/>
    <property type="match status" value="1"/>
</dbReference>
<dbReference type="Gene3D" id="3.40.50.720">
    <property type="entry name" value="NAD(P)-binding Rossmann-like Domain"/>
    <property type="match status" value="1"/>
</dbReference>
<dbReference type="HAMAP" id="MF_01576">
    <property type="entry name" value="THF_DHG_CYH"/>
    <property type="match status" value="1"/>
</dbReference>
<dbReference type="InterPro" id="IPR046346">
    <property type="entry name" value="Aminoacid_DH-like_N_sf"/>
</dbReference>
<dbReference type="InterPro" id="IPR036291">
    <property type="entry name" value="NAD(P)-bd_dom_sf"/>
</dbReference>
<dbReference type="InterPro" id="IPR000672">
    <property type="entry name" value="THF_DH/CycHdrlase"/>
</dbReference>
<dbReference type="InterPro" id="IPR020630">
    <property type="entry name" value="THF_DH/CycHdrlase_cat_dom"/>
</dbReference>
<dbReference type="InterPro" id="IPR020867">
    <property type="entry name" value="THF_DH/CycHdrlase_CS"/>
</dbReference>
<dbReference type="InterPro" id="IPR020631">
    <property type="entry name" value="THF_DH/CycHdrlase_NAD-bd_dom"/>
</dbReference>
<dbReference type="NCBIfam" id="NF008058">
    <property type="entry name" value="PRK10792.1"/>
    <property type="match status" value="1"/>
</dbReference>
<dbReference type="NCBIfam" id="NF010783">
    <property type="entry name" value="PRK14186.1"/>
    <property type="match status" value="1"/>
</dbReference>
<dbReference type="NCBIfam" id="NF010785">
    <property type="entry name" value="PRK14188.1"/>
    <property type="match status" value="1"/>
</dbReference>
<dbReference type="PANTHER" id="PTHR48099:SF5">
    <property type="entry name" value="C-1-TETRAHYDROFOLATE SYNTHASE, CYTOPLASMIC"/>
    <property type="match status" value="1"/>
</dbReference>
<dbReference type="PANTHER" id="PTHR48099">
    <property type="entry name" value="C-1-TETRAHYDROFOLATE SYNTHASE, CYTOPLASMIC-RELATED"/>
    <property type="match status" value="1"/>
</dbReference>
<dbReference type="Pfam" id="PF00763">
    <property type="entry name" value="THF_DHG_CYH"/>
    <property type="match status" value="1"/>
</dbReference>
<dbReference type="Pfam" id="PF02882">
    <property type="entry name" value="THF_DHG_CYH_C"/>
    <property type="match status" value="1"/>
</dbReference>
<dbReference type="PRINTS" id="PR00085">
    <property type="entry name" value="THFDHDRGNASE"/>
</dbReference>
<dbReference type="SUPFAM" id="SSF53223">
    <property type="entry name" value="Aminoacid dehydrogenase-like, N-terminal domain"/>
    <property type="match status" value="1"/>
</dbReference>
<dbReference type="SUPFAM" id="SSF51735">
    <property type="entry name" value="NAD(P)-binding Rossmann-fold domains"/>
    <property type="match status" value="1"/>
</dbReference>
<dbReference type="PROSITE" id="PS00766">
    <property type="entry name" value="THF_DHG_CYH_1"/>
    <property type="match status" value="1"/>
</dbReference>
<dbReference type="PROSITE" id="PS00767">
    <property type="entry name" value="THF_DHG_CYH_2"/>
    <property type="match status" value="1"/>
</dbReference>
<name>FOLD2_SINMW</name>
<evidence type="ECO:0000255" key="1">
    <source>
        <dbReference type="HAMAP-Rule" id="MF_01576"/>
    </source>
</evidence>
<sequence length="297" mass="31345">MGMDRIADRAIIDGKRFAAGLLDDITARVKKLEEETGQVPGLAVVLVGEDPASRVYVGSKHRQTLAAGIASFKYELPAETTQEELMALIDRLNVDPAVHGILVQLPLPAHLDANAVIQEINPNKDVDGFHISNAGRLATGQPAFVPCTPLGCLLLLKDRLGANLSGLHAVVLGKSNIVGRPMVQLLLAESCTVTIAHSRTRNAPELCREADILIVAVGRPGLVRGDWIKPGAVVIDVGINRVEAEGKSRIVGDVAFEEAGHAGAITPVPGGVGPMTIACLLSNTLTAFCRQHAVNID</sequence>
<gene>
    <name evidence="1" type="primary">folD2</name>
    <name type="ordered locus">Smed_2095</name>
</gene>